<protein>
    <recommendedName>
        <fullName>Pre-mRNA-splicing factor syf2</fullName>
    </recommendedName>
</protein>
<name>SYF2_DANRE</name>
<keyword id="KW-0175">Coiled coil</keyword>
<keyword id="KW-0507">mRNA processing</keyword>
<keyword id="KW-0508">mRNA splicing</keyword>
<keyword id="KW-0539">Nucleus</keyword>
<keyword id="KW-1185">Reference proteome</keyword>
<keyword id="KW-0747">Spliceosome</keyword>
<dbReference type="EMBL" id="BC076298">
    <property type="protein sequence ID" value="AAH76298.1"/>
    <property type="molecule type" value="mRNA"/>
</dbReference>
<dbReference type="EMBL" id="BC091556">
    <property type="protein sequence ID" value="AAH91556.1"/>
    <property type="molecule type" value="mRNA"/>
</dbReference>
<dbReference type="RefSeq" id="NP_001003437.1">
    <property type="nucleotide sequence ID" value="NM_001003437.2"/>
</dbReference>
<dbReference type="SMR" id="Q6DGP2"/>
<dbReference type="FunCoup" id="Q6DGP2">
    <property type="interactions" value="2095"/>
</dbReference>
<dbReference type="STRING" id="7955.ENSDARP00000090723"/>
<dbReference type="PaxDb" id="7955-ENSDARP00000090723"/>
<dbReference type="Ensembl" id="ENSDART00000099950">
    <property type="protein sequence ID" value="ENSDARP00000090723"/>
    <property type="gene ID" value="ENSDARG00000004706"/>
</dbReference>
<dbReference type="GeneID" id="445043"/>
<dbReference type="KEGG" id="dre:445043"/>
<dbReference type="AGR" id="ZFIN:ZDB-GENE-040801-170"/>
<dbReference type="CTD" id="25949"/>
<dbReference type="ZFIN" id="ZDB-GENE-040801-170">
    <property type="gene designation" value="syf2"/>
</dbReference>
<dbReference type="eggNOG" id="KOG2609">
    <property type="taxonomic scope" value="Eukaryota"/>
</dbReference>
<dbReference type="HOGENOM" id="CLU_051065_3_0_1"/>
<dbReference type="InParanoid" id="Q6DGP2"/>
<dbReference type="OMA" id="RRRMHND"/>
<dbReference type="OrthoDB" id="199717at2759"/>
<dbReference type="PhylomeDB" id="Q6DGP2"/>
<dbReference type="TreeFam" id="TF313041"/>
<dbReference type="Reactome" id="R-DRE-72163">
    <property type="pathway name" value="mRNA Splicing - Major Pathway"/>
</dbReference>
<dbReference type="PRO" id="PR:Q6DGP2"/>
<dbReference type="Proteomes" id="UP000000437">
    <property type="component" value="Chromosome 13"/>
</dbReference>
<dbReference type="Bgee" id="ENSDARG00000004706">
    <property type="expression patterns" value="Expressed in testis and 30 other cell types or tissues"/>
</dbReference>
<dbReference type="GO" id="GO:0071013">
    <property type="term" value="C:catalytic step 2 spliceosome"/>
    <property type="evidence" value="ECO:0000318"/>
    <property type="project" value="GO_Central"/>
</dbReference>
<dbReference type="GO" id="GO:0005634">
    <property type="term" value="C:nucleus"/>
    <property type="evidence" value="ECO:0000250"/>
    <property type="project" value="UniProtKB"/>
</dbReference>
<dbReference type="GO" id="GO:0071014">
    <property type="term" value="C:post-mRNA release spliceosomal complex"/>
    <property type="evidence" value="ECO:0000318"/>
    <property type="project" value="GO_Central"/>
</dbReference>
<dbReference type="GO" id="GO:0000974">
    <property type="term" value="C:Prp19 complex"/>
    <property type="evidence" value="ECO:0000318"/>
    <property type="project" value="GO_Central"/>
</dbReference>
<dbReference type="GO" id="GO:0071007">
    <property type="term" value="C:U2-type catalytic step 2 spliceosome"/>
    <property type="evidence" value="ECO:0000250"/>
    <property type="project" value="UniProtKB"/>
</dbReference>
<dbReference type="GO" id="GO:0000398">
    <property type="term" value="P:mRNA splicing, via spliceosome"/>
    <property type="evidence" value="ECO:0000250"/>
    <property type="project" value="UniProtKB"/>
</dbReference>
<dbReference type="InterPro" id="IPR013260">
    <property type="entry name" value="mRNA_splic_SYF2"/>
</dbReference>
<dbReference type="PANTHER" id="PTHR13264">
    <property type="entry name" value="GCIP-INTERACTING PROTEIN P29"/>
    <property type="match status" value="1"/>
</dbReference>
<dbReference type="PANTHER" id="PTHR13264:SF5">
    <property type="entry name" value="PRE-MRNA-SPLICING FACTOR SYF2"/>
    <property type="match status" value="1"/>
</dbReference>
<dbReference type="Pfam" id="PF08231">
    <property type="entry name" value="SYF2"/>
    <property type="match status" value="1"/>
</dbReference>
<sequence>MASSEEVVAPSNEEEVTETPAAQKREERLRKFRELHFKRNEARKLNHQEVVEEDKRLKLPSNWEAKKARLEYELLVDQKKKECAERGEDYDRVKLLEISAEDAERWERKKKKRNPDPGFSGYAEAQLRQYQRLTKQIKPDMENYEKQKEECGEDFHPTSNSLIYGTHVPSKDSINRMVDDVEKQIEKRAKYSRRRAYNDDADIDYINERNAKFNKKAERFYGKYTAEIKQNLERGTAV</sequence>
<proteinExistence type="evidence at transcript level"/>
<accession>Q6DGP2</accession>
<accession>Q5BJA7</accession>
<feature type="chain" id="PRO_0000250379" description="Pre-mRNA-splicing factor syf2">
    <location>
        <begin position="1"/>
        <end position="238"/>
    </location>
</feature>
<feature type="region of interest" description="Disordered" evidence="3">
    <location>
        <begin position="1"/>
        <end position="25"/>
    </location>
</feature>
<feature type="coiled-coil region" evidence="2">
    <location>
        <begin position="64"/>
        <end position="85"/>
    </location>
</feature>
<feature type="sequence conflict" description="In Ref. 1; AAH91556." evidence="4" ref="1">
    <original>R</original>
    <variation>G</variation>
    <location>
        <position position="108"/>
    </location>
</feature>
<feature type="sequence conflict" description="In Ref. 1; AAH91556." evidence="4" ref="1">
    <original>K</original>
    <variation>R</variation>
    <location>
        <position position="148"/>
    </location>
</feature>
<feature type="sequence conflict" description="In Ref. 1; AAH91556." evidence="4" ref="1">
    <original>E</original>
    <variation>D</variation>
    <location>
        <position position="150"/>
    </location>
</feature>
<evidence type="ECO:0000250" key="1">
    <source>
        <dbReference type="UniProtKB" id="O95926"/>
    </source>
</evidence>
<evidence type="ECO:0000255" key="2"/>
<evidence type="ECO:0000256" key="3">
    <source>
        <dbReference type="SAM" id="MobiDB-lite"/>
    </source>
</evidence>
<evidence type="ECO:0000305" key="4"/>
<reference key="1">
    <citation type="submission" date="2004-07" db="EMBL/GenBank/DDBJ databases">
        <authorList>
            <consortium name="NIH - Zebrafish Gene Collection (ZGC) project"/>
        </authorList>
    </citation>
    <scope>NUCLEOTIDE SEQUENCE [LARGE SCALE MRNA]</scope>
    <source>
        <tissue>Brain</tissue>
        <tissue>Olfactory epithelium</tissue>
    </source>
</reference>
<gene>
    <name type="primary">syf2</name>
    <name type="ORF">zgc:92835</name>
</gene>
<comment type="function">
    <text evidence="1">Involved in pre-mRNA splicing as component of the spliceosome.</text>
</comment>
<comment type="subunit">
    <text evidence="1">Identified in the spliceosome C complex.</text>
</comment>
<comment type="subcellular location">
    <subcellularLocation>
        <location evidence="1">Nucleus</location>
    </subcellularLocation>
</comment>
<comment type="similarity">
    <text evidence="4">Belongs to the SYF2 family.</text>
</comment>
<organism>
    <name type="scientific">Danio rerio</name>
    <name type="common">Zebrafish</name>
    <name type="synonym">Brachydanio rerio</name>
    <dbReference type="NCBI Taxonomy" id="7955"/>
    <lineage>
        <taxon>Eukaryota</taxon>
        <taxon>Metazoa</taxon>
        <taxon>Chordata</taxon>
        <taxon>Craniata</taxon>
        <taxon>Vertebrata</taxon>
        <taxon>Euteleostomi</taxon>
        <taxon>Actinopterygii</taxon>
        <taxon>Neopterygii</taxon>
        <taxon>Teleostei</taxon>
        <taxon>Ostariophysi</taxon>
        <taxon>Cypriniformes</taxon>
        <taxon>Danionidae</taxon>
        <taxon>Danioninae</taxon>
        <taxon>Danio</taxon>
    </lineage>
</organism>